<proteinExistence type="inferred from homology"/>
<reference key="1">
    <citation type="submission" date="2006-08" db="EMBL/GenBank/DDBJ databases">
        <title>Complete sequence of chromosome 1 of Burkholderia cenocepacia HI2424.</title>
        <authorList>
            <person name="Copeland A."/>
            <person name="Lucas S."/>
            <person name="Lapidus A."/>
            <person name="Barry K."/>
            <person name="Detter J.C."/>
            <person name="Glavina del Rio T."/>
            <person name="Hammon N."/>
            <person name="Israni S."/>
            <person name="Pitluck S."/>
            <person name="Chain P."/>
            <person name="Malfatti S."/>
            <person name="Shin M."/>
            <person name="Vergez L."/>
            <person name="Schmutz J."/>
            <person name="Larimer F."/>
            <person name="Land M."/>
            <person name="Hauser L."/>
            <person name="Kyrpides N."/>
            <person name="Kim E."/>
            <person name="LiPuma J.J."/>
            <person name="Gonzalez C.F."/>
            <person name="Konstantinidis K."/>
            <person name="Tiedje J.M."/>
            <person name="Richardson P."/>
        </authorList>
    </citation>
    <scope>NUCLEOTIDE SEQUENCE [LARGE SCALE GENOMIC DNA]</scope>
    <source>
        <strain>HI2424</strain>
    </source>
</reference>
<feature type="chain" id="PRO_0000347368" description="Urease accessory protein UreG">
    <location>
        <begin position="1"/>
        <end position="215"/>
    </location>
</feature>
<feature type="binding site" evidence="1">
    <location>
        <begin position="24"/>
        <end position="31"/>
    </location>
    <ligand>
        <name>GTP</name>
        <dbReference type="ChEBI" id="CHEBI:37565"/>
    </ligand>
</feature>
<gene>
    <name evidence="1" type="primary">ureG</name>
    <name type="ordered locus">Bcen2424_0897</name>
</gene>
<name>UREG_BURCH</name>
<evidence type="ECO:0000255" key="1">
    <source>
        <dbReference type="HAMAP-Rule" id="MF_01389"/>
    </source>
</evidence>
<protein>
    <recommendedName>
        <fullName evidence="1">Urease accessory protein UreG</fullName>
    </recommendedName>
</protein>
<sequence>MNAPAPSSIRRTKKLPPLRVGIGGPVGSGKTTLLEMLCKAMRDRYDLVAITNDIYTKEDQRLLTVAGALPEERIMGVETGGCPHTAIREDASINLEAVDRMLARFPDADIVFIESGGDNLAATFSPELSDLTIYVIDVAGGEKIPRKGGPGITKSDLLVINKTDLAPLVGANLDVMASDTRKMRGERPYVMTNLKALDGVADVIAFIEKKGLLTV</sequence>
<keyword id="KW-0143">Chaperone</keyword>
<keyword id="KW-0963">Cytoplasm</keyword>
<keyword id="KW-0342">GTP-binding</keyword>
<keyword id="KW-0996">Nickel insertion</keyword>
<keyword id="KW-0547">Nucleotide-binding</keyword>
<accession>A0K573</accession>
<organism>
    <name type="scientific">Burkholderia cenocepacia (strain HI2424)</name>
    <dbReference type="NCBI Taxonomy" id="331272"/>
    <lineage>
        <taxon>Bacteria</taxon>
        <taxon>Pseudomonadati</taxon>
        <taxon>Pseudomonadota</taxon>
        <taxon>Betaproteobacteria</taxon>
        <taxon>Burkholderiales</taxon>
        <taxon>Burkholderiaceae</taxon>
        <taxon>Burkholderia</taxon>
        <taxon>Burkholderia cepacia complex</taxon>
    </lineage>
</organism>
<comment type="function">
    <text evidence="1">Facilitates the functional incorporation of the urease nickel metallocenter. This process requires GTP hydrolysis, probably effectuated by UreG.</text>
</comment>
<comment type="subunit">
    <text evidence="1">Homodimer. UreD, UreF and UreG form a complex that acts as a GTP-hydrolysis-dependent molecular chaperone, activating the urease apoprotein by helping to assemble the nickel containing metallocenter of UreC. The UreE protein probably delivers the nickel.</text>
</comment>
<comment type="subcellular location">
    <subcellularLocation>
        <location evidence="1">Cytoplasm</location>
    </subcellularLocation>
</comment>
<comment type="similarity">
    <text evidence="1">Belongs to the SIMIBI class G3E GTPase family. UreG subfamily.</text>
</comment>
<dbReference type="EMBL" id="CP000458">
    <property type="protein sequence ID" value="ABK07650.1"/>
    <property type="molecule type" value="Genomic_DNA"/>
</dbReference>
<dbReference type="RefSeq" id="WP_011544769.1">
    <property type="nucleotide sequence ID" value="NC_008542.1"/>
</dbReference>
<dbReference type="SMR" id="A0K573"/>
<dbReference type="KEGG" id="bch:Bcen2424_0897"/>
<dbReference type="HOGENOM" id="CLU_072144_1_0_4"/>
<dbReference type="GO" id="GO:0005737">
    <property type="term" value="C:cytoplasm"/>
    <property type="evidence" value="ECO:0007669"/>
    <property type="project" value="UniProtKB-SubCell"/>
</dbReference>
<dbReference type="GO" id="GO:0005525">
    <property type="term" value="F:GTP binding"/>
    <property type="evidence" value="ECO:0007669"/>
    <property type="project" value="UniProtKB-KW"/>
</dbReference>
<dbReference type="GO" id="GO:0003924">
    <property type="term" value="F:GTPase activity"/>
    <property type="evidence" value="ECO:0007669"/>
    <property type="project" value="InterPro"/>
</dbReference>
<dbReference type="GO" id="GO:0016151">
    <property type="term" value="F:nickel cation binding"/>
    <property type="evidence" value="ECO:0007669"/>
    <property type="project" value="UniProtKB-UniRule"/>
</dbReference>
<dbReference type="GO" id="GO:0043419">
    <property type="term" value="P:urea catabolic process"/>
    <property type="evidence" value="ECO:0007669"/>
    <property type="project" value="InterPro"/>
</dbReference>
<dbReference type="CDD" id="cd05540">
    <property type="entry name" value="UreG"/>
    <property type="match status" value="1"/>
</dbReference>
<dbReference type="FunFam" id="3.40.50.300:FF:000208">
    <property type="entry name" value="Urease accessory protein UreG"/>
    <property type="match status" value="1"/>
</dbReference>
<dbReference type="Gene3D" id="3.40.50.300">
    <property type="entry name" value="P-loop containing nucleotide triphosphate hydrolases"/>
    <property type="match status" value="1"/>
</dbReference>
<dbReference type="HAMAP" id="MF_01389">
    <property type="entry name" value="UreG"/>
    <property type="match status" value="1"/>
</dbReference>
<dbReference type="InterPro" id="IPR003495">
    <property type="entry name" value="CobW/HypB/UreG_nucleotide-bd"/>
</dbReference>
<dbReference type="InterPro" id="IPR027417">
    <property type="entry name" value="P-loop_NTPase"/>
</dbReference>
<dbReference type="InterPro" id="IPR004400">
    <property type="entry name" value="UreG"/>
</dbReference>
<dbReference type="NCBIfam" id="TIGR00101">
    <property type="entry name" value="ureG"/>
    <property type="match status" value="1"/>
</dbReference>
<dbReference type="PANTHER" id="PTHR31715">
    <property type="entry name" value="UREASE ACCESSORY PROTEIN G"/>
    <property type="match status" value="1"/>
</dbReference>
<dbReference type="PANTHER" id="PTHR31715:SF0">
    <property type="entry name" value="UREASE ACCESSORY PROTEIN G"/>
    <property type="match status" value="1"/>
</dbReference>
<dbReference type="Pfam" id="PF02492">
    <property type="entry name" value="cobW"/>
    <property type="match status" value="1"/>
</dbReference>
<dbReference type="PIRSF" id="PIRSF005624">
    <property type="entry name" value="Ni-bind_GTPase"/>
    <property type="match status" value="1"/>
</dbReference>
<dbReference type="SUPFAM" id="SSF52540">
    <property type="entry name" value="P-loop containing nucleoside triphosphate hydrolases"/>
    <property type="match status" value="1"/>
</dbReference>